<organism>
    <name type="scientific">Saccharomyces cerevisiae (strain ATCC 204508 / S288c)</name>
    <name type="common">Baker's yeast</name>
    <dbReference type="NCBI Taxonomy" id="559292"/>
    <lineage>
        <taxon>Eukaryota</taxon>
        <taxon>Fungi</taxon>
        <taxon>Dikarya</taxon>
        <taxon>Ascomycota</taxon>
        <taxon>Saccharomycotina</taxon>
        <taxon>Saccharomycetes</taxon>
        <taxon>Saccharomycetales</taxon>
        <taxon>Saccharomycetaceae</taxon>
        <taxon>Saccharomyces</taxon>
    </lineage>
</organism>
<reference key="1">
    <citation type="journal article" date="1997" name="Nature">
        <title>The nucleotide sequence of Saccharomyces cerevisiae chromosome V.</title>
        <authorList>
            <person name="Dietrich F.S."/>
            <person name="Mulligan J.T."/>
            <person name="Hennessy K.M."/>
            <person name="Yelton M.A."/>
            <person name="Allen E."/>
            <person name="Araujo R."/>
            <person name="Aviles E."/>
            <person name="Berno A."/>
            <person name="Brennan T."/>
            <person name="Carpenter J."/>
            <person name="Chen E."/>
            <person name="Cherry J.M."/>
            <person name="Chung E."/>
            <person name="Duncan M."/>
            <person name="Guzman E."/>
            <person name="Hartzell G."/>
            <person name="Hunicke-Smith S."/>
            <person name="Hyman R.W."/>
            <person name="Kayser A."/>
            <person name="Komp C."/>
            <person name="Lashkari D."/>
            <person name="Lew H."/>
            <person name="Lin D."/>
            <person name="Mosedale D."/>
            <person name="Nakahara K."/>
            <person name="Namath A."/>
            <person name="Norgren R."/>
            <person name="Oefner P."/>
            <person name="Oh C."/>
            <person name="Petel F.X."/>
            <person name="Roberts D."/>
            <person name="Sehl P."/>
            <person name="Schramm S."/>
            <person name="Shogren T."/>
            <person name="Smith V."/>
            <person name="Taylor P."/>
            <person name="Wei Y."/>
            <person name="Botstein D."/>
            <person name="Davis R.W."/>
        </authorList>
    </citation>
    <scope>NUCLEOTIDE SEQUENCE [LARGE SCALE GENOMIC DNA]</scope>
    <source>
        <strain>ATCC 204508 / S288c</strain>
    </source>
</reference>
<reference key="2">
    <citation type="journal article" date="2014" name="G3 (Bethesda)">
        <title>The reference genome sequence of Saccharomyces cerevisiae: Then and now.</title>
        <authorList>
            <person name="Engel S.R."/>
            <person name="Dietrich F.S."/>
            <person name="Fisk D.G."/>
            <person name="Binkley G."/>
            <person name="Balakrishnan R."/>
            <person name="Costanzo M.C."/>
            <person name="Dwight S.S."/>
            <person name="Hitz B.C."/>
            <person name="Karra K."/>
            <person name="Nash R.S."/>
            <person name="Weng S."/>
            <person name="Wong E.D."/>
            <person name="Lloyd P."/>
            <person name="Skrzypek M.S."/>
            <person name="Miyasato S.R."/>
            <person name="Simison M."/>
            <person name="Cherry J.M."/>
        </authorList>
    </citation>
    <scope>GENOME REANNOTATION</scope>
    <source>
        <strain>ATCC 204508 / S288c</strain>
    </source>
</reference>
<reference key="3">
    <citation type="journal article" date="1988" name="Nucleic Acids Res.">
        <title>Molecular cloning and nucleotide sequence of the nuclear PET122 gene required for expression of the mitochondrial COX3 gene in S. cerevisiae.</title>
        <authorList>
            <person name="Ohmen J.D."/>
            <person name="Kloeckener-Gruissem B."/>
            <person name="McEwen J.E."/>
        </authorList>
    </citation>
    <scope>NUCLEOTIDE SEQUENCE [GENOMIC DNA] OF 1-230</scope>
    <source>
        <strain>ATCC 204510 / AB320</strain>
    </source>
</reference>
<reference key="4">
    <citation type="journal article" date="1990" name="Mol. Cell. Biol.">
        <title>Divergent overlapping transcripts at the PET122 locus in Saccharomyces cerevisiae.</title>
        <authorList>
            <person name="Ohmen J.D."/>
            <person name="Burke K.A."/>
            <person name="McEwen J.E."/>
        </authorList>
    </citation>
    <scope>NUCLEOTIDE SEQUENCE [GENOMIC DNA] OF 1-230</scope>
    <scope>SEQUENCE REVISION</scope>
</reference>
<reference key="5">
    <citation type="journal article" date="2003" name="Nature">
        <title>Global analysis of protein expression in yeast.</title>
        <authorList>
            <person name="Ghaemmaghami S."/>
            <person name="Huh W.-K."/>
            <person name="Bower K."/>
            <person name="Howson R.W."/>
            <person name="Belle A."/>
            <person name="Dephoure N."/>
            <person name="O'Shea E.K."/>
            <person name="Weissman J.S."/>
        </authorList>
    </citation>
    <scope>LEVEL OF PROTEIN EXPRESSION [LARGE SCALE ANALYSIS]</scope>
</reference>
<gene>
    <name type="ordered locus">YER152C</name>
</gene>
<name>YEY2_YEAST</name>
<sequence>MKYKEINFFKGHPSSRLLPREAVIQATAAILGPETREYDNDPYNRHPLTYGSDEGALWVREQICTFLNDQLFKFENGARSRTRADYLNLNSGASYGMLNILLQTTLPHNGYTRQAFIITPTYFLINNCFTDAGFKGKMTAINEQGHDSIDFESLISALEQHEAEPQPHSTTEMIQGPKLTKKVYRYVMYCIPTFANPSGNTYSLETRRRLIDIARKYDMLIITDDVYDILDYTTPSDELPSPPLRMVHIDRSTAPSGEDSFGNTVSNATFSKLIAPGLRFGYHESINANLARQLSKGGANVSGGTPSQLNSMIVGEMLRSGAAQRCIAHLRSVYSERATVLTSALKKYMPLGTEIMPLKGGYFTWITLPPAYNAMEISTILAKKFNVILADGSNFEVIGDEKNWGQSCFRLSISFLEVDDIDRGIELFGAVCKSHAITNNITM</sequence>
<dbReference type="EMBL" id="U18917">
    <property type="protein sequence ID" value="AAB64679.1"/>
    <property type="molecule type" value="Genomic_DNA"/>
</dbReference>
<dbReference type="EMBL" id="X07558">
    <property type="protein sequence ID" value="CAA30440.1"/>
    <property type="molecule type" value="Genomic_DNA"/>
</dbReference>
<dbReference type="EMBL" id="BK006939">
    <property type="protein sequence ID" value="DAA07813.1"/>
    <property type="molecule type" value="Genomic_DNA"/>
</dbReference>
<dbReference type="PIR" id="S50655">
    <property type="entry name" value="QQBYPT"/>
</dbReference>
<dbReference type="RefSeq" id="NP_011079.3">
    <property type="nucleotide sequence ID" value="NM_001179042.3"/>
</dbReference>
<dbReference type="SMR" id="P10356"/>
<dbReference type="BioGRID" id="36902">
    <property type="interactions" value="40"/>
</dbReference>
<dbReference type="DIP" id="DIP-5414N"/>
<dbReference type="FunCoup" id="P10356">
    <property type="interactions" value="115"/>
</dbReference>
<dbReference type="IntAct" id="P10356">
    <property type="interactions" value="2"/>
</dbReference>
<dbReference type="STRING" id="4932.YER152C"/>
<dbReference type="GlyGen" id="P10356">
    <property type="glycosylation" value="1 site"/>
</dbReference>
<dbReference type="iPTMnet" id="P10356"/>
<dbReference type="PaxDb" id="4932-YER152C"/>
<dbReference type="PeptideAtlas" id="P10356"/>
<dbReference type="TopDownProteomics" id="P10356"/>
<dbReference type="EnsemblFungi" id="YER152C_mRNA">
    <property type="protein sequence ID" value="YER152C"/>
    <property type="gene ID" value="YER152C"/>
</dbReference>
<dbReference type="GeneID" id="856896"/>
<dbReference type="KEGG" id="sce:YER152C"/>
<dbReference type="AGR" id="SGD:S000000954"/>
<dbReference type="SGD" id="S000000954">
    <property type="gene designation" value="YER152C"/>
</dbReference>
<dbReference type="VEuPathDB" id="FungiDB:YER152C"/>
<dbReference type="eggNOG" id="KOG0634">
    <property type="taxonomic scope" value="Eukaryota"/>
</dbReference>
<dbReference type="HOGENOM" id="CLU_017584_0_6_1"/>
<dbReference type="InParanoid" id="P10356"/>
<dbReference type="OMA" id="DFLQWPV"/>
<dbReference type="OrthoDB" id="7042322at2759"/>
<dbReference type="BioCyc" id="YEAST:G3O-30313-MONOMER"/>
<dbReference type="BioGRID-ORCS" id="856896">
    <property type="hits" value="10 hits in 10 CRISPR screens"/>
</dbReference>
<dbReference type="PRO" id="PR:P10356"/>
<dbReference type="Proteomes" id="UP000002311">
    <property type="component" value="Chromosome V"/>
</dbReference>
<dbReference type="RNAct" id="P10356">
    <property type="molecule type" value="protein"/>
</dbReference>
<dbReference type="GO" id="GO:0005737">
    <property type="term" value="C:cytoplasm"/>
    <property type="evidence" value="ECO:0007005"/>
    <property type="project" value="SGD"/>
</dbReference>
<dbReference type="GO" id="GO:0005634">
    <property type="term" value="C:nucleus"/>
    <property type="evidence" value="ECO:0007005"/>
    <property type="project" value="SGD"/>
</dbReference>
<dbReference type="GO" id="GO:0047536">
    <property type="term" value="F:2-aminoadipate transaminase activity"/>
    <property type="evidence" value="ECO:0000314"/>
    <property type="project" value="SGD"/>
</dbReference>
<dbReference type="GO" id="GO:0030170">
    <property type="term" value="F:pyridoxal phosphate binding"/>
    <property type="evidence" value="ECO:0007669"/>
    <property type="project" value="InterPro"/>
</dbReference>
<dbReference type="GO" id="GO:0009058">
    <property type="term" value="P:biosynthetic process"/>
    <property type="evidence" value="ECO:0007669"/>
    <property type="project" value="InterPro"/>
</dbReference>
<dbReference type="CDD" id="cd00609">
    <property type="entry name" value="AAT_like"/>
    <property type="match status" value="1"/>
</dbReference>
<dbReference type="FunFam" id="3.40.640.10:FF:000080">
    <property type="entry name" value="Aminotransferase, putative"/>
    <property type="match status" value="1"/>
</dbReference>
<dbReference type="FunFam" id="3.90.1150.10:FF:000088">
    <property type="entry name" value="Aminotransferase, putative"/>
    <property type="match status" value="1"/>
</dbReference>
<dbReference type="Gene3D" id="3.90.1150.10">
    <property type="entry name" value="Aspartate Aminotransferase, domain 1"/>
    <property type="match status" value="1"/>
</dbReference>
<dbReference type="Gene3D" id="3.40.640.10">
    <property type="entry name" value="Type I PLP-dependent aspartate aminotransferase-like (Major domain)"/>
    <property type="match status" value="1"/>
</dbReference>
<dbReference type="InterPro" id="IPR004839">
    <property type="entry name" value="Aminotransferase_I/II_large"/>
</dbReference>
<dbReference type="InterPro" id="IPR015424">
    <property type="entry name" value="PyrdxlP-dep_Trfase"/>
</dbReference>
<dbReference type="InterPro" id="IPR015421">
    <property type="entry name" value="PyrdxlP-dep_Trfase_major"/>
</dbReference>
<dbReference type="InterPro" id="IPR015422">
    <property type="entry name" value="PyrdxlP-dep_Trfase_small"/>
</dbReference>
<dbReference type="PANTHER" id="PTHR42858">
    <property type="entry name" value="AMINOTRANSFERASE"/>
    <property type="match status" value="1"/>
</dbReference>
<dbReference type="PANTHER" id="PTHR42858:SF1">
    <property type="entry name" value="LD15494P"/>
    <property type="match status" value="1"/>
</dbReference>
<dbReference type="Pfam" id="PF00155">
    <property type="entry name" value="Aminotran_1_2"/>
    <property type="match status" value="1"/>
</dbReference>
<dbReference type="SUPFAM" id="SSF53383">
    <property type="entry name" value="PLP-dependent transferases"/>
    <property type="match status" value="1"/>
</dbReference>
<protein>
    <recommendedName>
        <fullName>Uncharacterized protein YER152C</fullName>
    </recommendedName>
</protein>
<keyword id="KW-1185">Reference proteome</keyword>
<evidence type="ECO:0000269" key="1">
    <source>
    </source>
</evidence>
<comment type="miscellaneous">
    <text evidence="1">Present with 1390 molecules/cell in log phase SD medium.</text>
</comment>
<accession>P10356</accession>
<accession>D3DM59</accession>
<feature type="chain" id="PRO_0000202655" description="Uncharacterized protein YER152C">
    <location>
        <begin position="1"/>
        <end position="443"/>
    </location>
</feature>
<proteinExistence type="evidence at protein level"/>